<gene>
    <name evidence="1" type="primary">psaI</name>
</gene>
<keyword id="KW-0150">Chloroplast</keyword>
<keyword id="KW-0472">Membrane</keyword>
<keyword id="KW-0602">Photosynthesis</keyword>
<keyword id="KW-0603">Photosystem I</keyword>
<keyword id="KW-0934">Plastid</keyword>
<keyword id="KW-1185">Reference proteome</keyword>
<keyword id="KW-0793">Thylakoid</keyword>
<keyword id="KW-0812">Transmembrane</keyword>
<keyword id="KW-1133">Transmembrane helix</keyword>
<sequence>MITFSFPSIFVPLVGLVFPAIAMASLSLHVQKNKII</sequence>
<protein>
    <recommendedName>
        <fullName evidence="1">Photosystem I reaction center subunit VIII</fullName>
        <shortName evidence="1">PSI-I</shortName>
    </recommendedName>
</protein>
<geneLocation type="chloroplast"/>
<evidence type="ECO:0000255" key="1">
    <source>
        <dbReference type="HAMAP-Rule" id="MF_00431"/>
    </source>
</evidence>
<feature type="chain" id="PRO_0000276016" description="Photosystem I reaction center subunit VIII">
    <location>
        <begin position="1"/>
        <end position="36"/>
    </location>
</feature>
<feature type="transmembrane region" description="Helical" evidence="1">
    <location>
        <begin position="1"/>
        <end position="21"/>
    </location>
</feature>
<reference key="1">
    <citation type="journal article" date="2007" name="Plant Biotechnol. J.">
        <title>The complete nucleotide sequence of the coffee (Coffea arabica L.) chloroplast genome: organization and implications for biotechnology and phylogenetic relationships amongst angiosperms.</title>
        <authorList>
            <person name="Samson N."/>
            <person name="Bausher M.G."/>
            <person name="Lee S.-B."/>
            <person name="Jansen R.K."/>
            <person name="Daniell H."/>
        </authorList>
    </citation>
    <scope>NUCLEOTIDE SEQUENCE [LARGE SCALE GENOMIC DNA]</scope>
</reference>
<comment type="function">
    <text evidence="1">May help in the organization of the PsaL subunit.</text>
</comment>
<comment type="subcellular location">
    <subcellularLocation>
        <location evidence="1">Plastid</location>
        <location evidence="1">Chloroplast thylakoid membrane</location>
        <topology evidence="1">Single-pass membrane protein</topology>
    </subcellularLocation>
</comment>
<comment type="similarity">
    <text evidence="1">Belongs to the PsaI family.</text>
</comment>
<accession>A0A345</accession>
<organism>
    <name type="scientific">Coffea arabica</name>
    <name type="common">Arabian coffee</name>
    <dbReference type="NCBI Taxonomy" id="13443"/>
    <lineage>
        <taxon>Eukaryota</taxon>
        <taxon>Viridiplantae</taxon>
        <taxon>Streptophyta</taxon>
        <taxon>Embryophyta</taxon>
        <taxon>Tracheophyta</taxon>
        <taxon>Spermatophyta</taxon>
        <taxon>Magnoliopsida</taxon>
        <taxon>eudicotyledons</taxon>
        <taxon>Gunneridae</taxon>
        <taxon>Pentapetalae</taxon>
        <taxon>asterids</taxon>
        <taxon>lamiids</taxon>
        <taxon>Gentianales</taxon>
        <taxon>Rubiaceae</taxon>
        <taxon>Ixoroideae</taxon>
        <taxon>Gardenieae complex</taxon>
        <taxon>Bertiereae - Coffeeae clade</taxon>
        <taxon>Coffeeae</taxon>
        <taxon>Coffea</taxon>
    </lineage>
</organism>
<dbReference type="EMBL" id="EF044213">
    <property type="protein sequence ID" value="ABJ89689.1"/>
    <property type="molecule type" value="Genomic_DNA"/>
</dbReference>
<dbReference type="RefSeq" id="YP_817492.1">
    <property type="nucleotide sequence ID" value="NC_008535.1"/>
</dbReference>
<dbReference type="SMR" id="A0A345"/>
<dbReference type="GeneID" id="4421773"/>
<dbReference type="OrthoDB" id="970998at2759"/>
<dbReference type="Proteomes" id="UP000515148">
    <property type="component" value="Chloroplast Pltd"/>
</dbReference>
<dbReference type="GO" id="GO:0009535">
    <property type="term" value="C:chloroplast thylakoid membrane"/>
    <property type="evidence" value="ECO:0007669"/>
    <property type="project" value="UniProtKB-SubCell"/>
</dbReference>
<dbReference type="GO" id="GO:0009522">
    <property type="term" value="C:photosystem I"/>
    <property type="evidence" value="ECO:0007669"/>
    <property type="project" value="UniProtKB-KW"/>
</dbReference>
<dbReference type="GO" id="GO:0015979">
    <property type="term" value="P:photosynthesis"/>
    <property type="evidence" value="ECO:0007669"/>
    <property type="project" value="UniProtKB-UniRule"/>
</dbReference>
<dbReference type="HAMAP" id="MF_00431">
    <property type="entry name" value="PSI_PsaI"/>
    <property type="match status" value="1"/>
</dbReference>
<dbReference type="InterPro" id="IPR001302">
    <property type="entry name" value="PSI_PsaI"/>
</dbReference>
<dbReference type="InterPro" id="IPR036357">
    <property type="entry name" value="PSI_PsaI_sf"/>
</dbReference>
<dbReference type="NCBIfam" id="TIGR03052">
    <property type="entry name" value="PS_I_psaI"/>
    <property type="match status" value="1"/>
</dbReference>
<dbReference type="PANTHER" id="PTHR35775">
    <property type="match status" value="1"/>
</dbReference>
<dbReference type="PANTHER" id="PTHR35775:SF2">
    <property type="entry name" value="PHOTOSYSTEM I REACTION CENTER SUBUNIT VIII"/>
    <property type="match status" value="1"/>
</dbReference>
<dbReference type="Pfam" id="PF00796">
    <property type="entry name" value="PSI_8"/>
    <property type="match status" value="1"/>
</dbReference>
<dbReference type="SUPFAM" id="SSF81540">
    <property type="entry name" value="Subunit VIII of photosystem I reaction centre, PsaI"/>
    <property type="match status" value="1"/>
</dbReference>
<name>PSAI_COFAR</name>
<proteinExistence type="inferred from homology"/>